<accession>Q4FRP0</accession>
<gene>
    <name evidence="1" type="primary">prmA</name>
    <name type="ordered locus">Psyc_1470</name>
</gene>
<name>PRMA_PSYA2</name>
<reference key="1">
    <citation type="journal article" date="2010" name="Appl. Environ. Microbiol.">
        <title>The genome sequence of Psychrobacter arcticus 273-4, a psychroactive Siberian permafrost bacterium, reveals mechanisms for adaptation to low-temperature growth.</title>
        <authorList>
            <person name="Ayala-del-Rio H.L."/>
            <person name="Chain P.S."/>
            <person name="Grzymski J.J."/>
            <person name="Ponder M.A."/>
            <person name="Ivanova N."/>
            <person name="Bergholz P.W."/>
            <person name="Di Bartolo G."/>
            <person name="Hauser L."/>
            <person name="Land M."/>
            <person name="Bakermans C."/>
            <person name="Rodrigues D."/>
            <person name="Klappenbach J."/>
            <person name="Zarka D."/>
            <person name="Larimer F."/>
            <person name="Richardson P."/>
            <person name="Murray A."/>
            <person name="Thomashow M."/>
            <person name="Tiedje J.M."/>
        </authorList>
    </citation>
    <scope>NUCLEOTIDE SEQUENCE [LARGE SCALE GENOMIC DNA]</scope>
    <source>
        <strain>DSM 17307 / VKM B-2377 / 273-4</strain>
    </source>
</reference>
<keyword id="KW-0963">Cytoplasm</keyword>
<keyword id="KW-0489">Methyltransferase</keyword>
<keyword id="KW-1185">Reference proteome</keyword>
<keyword id="KW-0949">S-adenosyl-L-methionine</keyword>
<keyword id="KW-0808">Transferase</keyword>
<proteinExistence type="inferred from homology"/>
<dbReference type="EC" id="2.1.1.-" evidence="1"/>
<dbReference type="EMBL" id="CP000082">
    <property type="protein sequence ID" value="AAZ19318.1"/>
    <property type="molecule type" value="Genomic_DNA"/>
</dbReference>
<dbReference type="RefSeq" id="WP_011280736.1">
    <property type="nucleotide sequence ID" value="NC_007204.1"/>
</dbReference>
<dbReference type="SMR" id="Q4FRP0"/>
<dbReference type="STRING" id="259536.Psyc_1470"/>
<dbReference type="KEGG" id="par:Psyc_1470"/>
<dbReference type="eggNOG" id="COG2264">
    <property type="taxonomic scope" value="Bacteria"/>
</dbReference>
<dbReference type="HOGENOM" id="CLU_049382_4_1_6"/>
<dbReference type="OrthoDB" id="9785995at2"/>
<dbReference type="Proteomes" id="UP000000546">
    <property type="component" value="Chromosome"/>
</dbReference>
<dbReference type="GO" id="GO:0005737">
    <property type="term" value="C:cytoplasm"/>
    <property type="evidence" value="ECO:0007669"/>
    <property type="project" value="UniProtKB-SubCell"/>
</dbReference>
<dbReference type="GO" id="GO:0016279">
    <property type="term" value="F:protein-lysine N-methyltransferase activity"/>
    <property type="evidence" value="ECO:0007669"/>
    <property type="project" value="TreeGrafter"/>
</dbReference>
<dbReference type="GO" id="GO:0032259">
    <property type="term" value="P:methylation"/>
    <property type="evidence" value="ECO:0007669"/>
    <property type="project" value="UniProtKB-KW"/>
</dbReference>
<dbReference type="CDD" id="cd02440">
    <property type="entry name" value="AdoMet_MTases"/>
    <property type="match status" value="1"/>
</dbReference>
<dbReference type="Gene3D" id="3.40.50.150">
    <property type="entry name" value="Vaccinia Virus protein VP39"/>
    <property type="match status" value="1"/>
</dbReference>
<dbReference type="HAMAP" id="MF_00735">
    <property type="entry name" value="Methyltr_PrmA"/>
    <property type="match status" value="1"/>
</dbReference>
<dbReference type="InterPro" id="IPR050078">
    <property type="entry name" value="Ribosomal_L11_MeTrfase_PrmA"/>
</dbReference>
<dbReference type="InterPro" id="IPR004498">
    <property type="entry name" value="Ribosomal_PrmA_MeTrfase"/>
</dbReference>
<dbReference type="InterPro" id="IPR029063">
    <property type="entry name" value="SAM-dependent_MTases_sf"/>
</dbReference>
<dbReference type="NCBIfam" id="TIGR00406">
    <property type="entry name" value="prmA"/>
    <property type="match status" value="1"/>
</dbReference>
<dbReference type="PANTHER" id="PTHR43648">
    <property type="entry name" value="ELECTRON TRANSFER FLAVOPROTEIN BETA SUBUNIT LYSINE METHYLTRANSFERASE"/>
    <property type="match status" value="1"/>
</dbReference>
<dbReference type="PANTHER" id="PTHR43648:SF1">
    <property type="entry name" value="ELECTRON TRANSFER FLAVOPROTEIN BETA SUBUNIT LYSINE METHYLTRANSFERASE"/>
    <property type="match status" value="1"/>
</dbReference>
<dbReference type="Pfam" id="PF06325">
    <property type="entry name" value="PrmA"/>
    <property type="match status" value="1"/>
</dbReference>
<dbReference type="PIRSF" id="PIRSF000401">
    <property type="entry name" value="RPL11_MTase"/>
    <property type="match status" value="1"/>
</dbReference>
<dbReference type="SUPFAM" id="SSF53335">
    <property type="entry name" value="S-adenosyl-L-methionine-dependent methyltransferases"/>
    <property type="match status" value="1"/>
</dbReference>
<evidence type="ECO:0000255" key="1">
    <source>
        <dbReference type="HAMAP-Rule" id="MF_00735"/>
    </source>
</evidence>
<sequence>MAWQQLHLQCEKDNVDLAEALLLEAGALSIALDDAGDQPLFEPLPGESPLWDEVILTGLFDATTEAGTSHVIEQFSHEIAAQVQASRTWVSAVDDKDWEREWMSNYKPIECANDLWIVPNWLTPPNPEATNIIMDPGLAFGTGYHATTRLCLDWLTEQDLKDKVVIDYGCGSGILGIAALLLGARHVYAVDIDPQAVLATNQNAARNSVDNRLQAFLPEDFTIFCQQQDIPAVEVMVANILAKPLIGLAPYFATLMASKSRIVLAGLIESQTEQVTEAYQPYFALDPKHAFTAQEDQHWQRLSGTFTG</sequence>
<feature type="chain" id="PRO_1000046073" description="Ribosomal protein L11 methyltransferase">
    <location>
        <begin position="1"/>
        <end position="308"/>
    </location>
</feature>
<feature type="binding site" evidence="1">
    <location>
        <position position="148"/>
    </location>
    <ligand>
        <name>S-adenosyl-L-methionine</name>
        <dbReference type="ChEBI" id="CHEBI:59789"/>
    </ligand>
</feature>
<feature type="binding site" evidence="1">
    <location>
        <position position="169"/>
    </location>
    <ligand>
        <name>S-adenosyl-L-methionine</name>
        <dbReference type="ChEBI" id="CHEBI:59789"/>
    </ligand>
</feature>
<feature type="binding site" evidence="1">
    <location>
        <position position="191"/>
    </location>
    <ligand>
        <name>S-adenosyl-L-methionine</name>
        <dbReference type="ChEBI" id="CHEBI:59789"/>
    </ligand>
</feature>
<feature type="binding site" evidence="1">
    <location>
        <position position="239"/>
    </location>
    <ligand>
        <name>S-adenosyl-L-methionine</name>
        <dbReference type="ChEBI" id="CHEBI:59789"/>
    </ligand>
</feature>
<protein>
    <recommendedName>
        <fullName evidence="1">Ribosomal protein L11 methyltransferase</fullName>
        <shortName evidence="1">L11 Mtase</shortName>
        <ecNumber evidence="1">2.1.1.-</ecNumber>
    </recommendedName>
</protein>
<organism>
    <name type="scientific">Psychrobacter arcticus (strain DSM 17307 / VKM B-2377 / 273-4)</name>
    <dbReference type="NCBI Taxonomy" id="259536"/>
    <lineage>
        <taxon>Bacteria</taxon>
        <taxon>Pseudomonadati</taxon>
        <taxon>Pseudomonadota</taxon>
        <taxon>Gammaproteobacteria</taxon>
        <taxon>Moraxellales</taxon>
        <taxon>Moraxellaceae</taxon>
        <taxon>Psychrobacter</taxon>
    </lineage>
</organism>
<comment type="function">
    <text evidence="1">Methylates ribosomal protein L11.</text>
</comment>
<comment type="catalytic activity">
    <reaction evidence="1">
        <text>L-lysyl-[protein] + 3 S-adenosyl-L-methionine = N(6),N(6),N(6)-trimethyl-L-lysyl-[protein] + 3 S-adenosyl-L-homocysteine + 3 H(+)</text>
        <dbReference type="Rhea" id="RHEA:54192"/>
        <dbReference type="Rhea" id="RHEA-COMP:9752"/>
        <dbReference type="Rhea" id="RHEA-COMP:13826"/>
        <dbReference type="ChEBI" id="CHEBI:15378"/>
        <dbReference type="ChEBI" id="CHEBI:29969"/>
        <dbReference type="ChEBI" id="CHEBI:57856"/>
        <dbReference type="ChEBI" id="CHEBI:59789"/>
        <dbReference type="ChEBI" id="CHEBI:61961"/>
    </reaction>
</comment>
<comment type="subcellular location">
    <subcellularLocation>
        <location evidence="1">Cytoplasm</location>
    </subcellularLocation>
</comment>
<comment type="similarity">
    <text evidence="1">Belongs to the methyltransferase superfamily. PrmA family.</text>
</comment>